<comment type="function">
    <text evidence="4">Alpha-ketoglutarate-dependent xanthine dioxygenase is a non-heme mononuclear Fe(2+) enzyme that decarboxylates alpha-ketoglutarate to succinate and CO(2) while hydroxylating xanthine to generate uric acid (PubMed:15948966). Allows xanthine utilization as a nitrogen source (PubMed:15948966).</text>
</comment>
<comment type="catalytic activity">
    <reaction evidence="4">
        <text>xanthine + 2-oxoglutarate + O2 = urate + succinate + CO2</text>
        <dbReference type="Rhea" id="RHEA:43120"/>
        <dbReference type="ChEBI" id="CHEBI:15379"/>
        <dbReference type="ChEBI" id="CHEBI:16526"/>
        <dbReference type="ChEBI" id="CHEBI:16810"/>
        <dbReference type="ChEBI" id="CHEBI:17712"/>
        <dbReference type="ChEBI" id="CHEBI:17775"/>
        <dbReference type="ChEBI" id="CHEBI:30031"/>
        <dbReference type="EC" id="1.14.11.48"/>
    </reaction>
    <physiologicalReaction direction="left-to-right" evidence="4">
        <dbReference type="Rhea" id="RHEA:43121"/>
    </physiologicalReaction>
</comment>
<comment type="cofactor">
    <cofactor evidence="2">
        <name>Fe(2+)</name>
        <dbReference type="ChEBI" id="CHEBI:29033"/>
    </cofactor>
    <text evidence="2">Binds 1 Fe(2+) ion per subunit.</text>
</comment>
<comment type="subcellular location">
    <subcellularLocation>
        <location evidence="1">Cytoplasm</location>
        <location evidence="1">Cytosol</location>
    </subcellularLocation>
</comment>
<comment type="disruption phenotype">
    <text evidence="4">Leads to cells defective for the utilization of hypoxanthine or xanthine as nitrogen sources, while being still able to utilize uric acid or allantoic acid.</text>
</comment>
<comment type="similarity">
    <text evidence="6">Belongs to the TfdA dioxygenase family.</text>
</comment>
<sequence>MSATATTTVVEPPTTTLTGATEPPFTAYTTSQGLRVSPVPLPEHNTDVGFGALIENVDLNNLSDEQFEDIRKALFEHQVVCFPNQHNLPPETQYAITHRFDPESSTYGHGNRTNQQNNSILHPDLHTLPGVPQVQLIGHGVVKDHYGLEEVRLKHPHHRTFHRDPISEEEEKEKQVTRFYRWHIDAALYDYNPPVVTTLLAVNAPQGTQTLRYDDKSGHEMPVPLGSTAFASGYRMYELLTDEEKKVAARTRVQYFPHAYVTINKARALPNGLGMYSEGLELDKSELPPWEESRVKTFPLLWKNPVTGKLALQTHGCCAEKILIDNEDGTTTVIDDLPKVREILYNYQRPGINPERVYCHDWKNGDFVIFHNRGVTHCITGAYRDDQTRIFHQCNLAASHPPAGPSEEDIAAM</sequence>
<organism>
    <name type="scientific">Schizosaccharomyces pombe (strain 972 / ATCC 24843)</name>
    <name type="common">Fission yeast</name>
    <dbReference type="NCBI Taxonomy" id="284812"/>
    <lineage>
        <taxon>Eukaryota</taxon>
        <taxon>Fungi</taxon>
        <taxon>Dikarya</taxon>
        <taxon>Ascomycota</taxon>
        <taxon>Taphrinomycotina</taxon>
        <taxon>Schizosaccharomycetes</taxon>
        <taxon>Schizosaccharomycetales</taxon>
        <taxon>Schizosaccharomycetaceae</taxon>
        <taxon>Schizosaccharomyces</taxon>
    </lineage>
</organism>
<protein>
    <recommendedName>
        <fullName evidence="5">Alpha-ketoglutarate-dependent xanthine dioxygenase xan1</fullName>
        <ecNumber evidence="4">1.14.11.48</ecNumber>
    </recommendedName>
</protein>
<dbReference type="EC" id="1.14.11.48" evidence="4"/>
<dbReference type="EMBL" id="CU329672">
    <property type="protein sequence ID" value="CAC36937.2"/>
    <property type="molecule type" value="Genomic_DNA"/>
</dbReference>
<dbReference type="PIR" id="T41411">
    <property type="entry name" value="T41411"/>
</dbReference>
<dbReference type="RefSeq" id="NP_588427.2">
    <property type="nucleotide sequence ID" value="NM_001023418.1"/>
</dbReference>
<dbReference type="SMR" id="O74885"/>
<dbReference type="BioGRID" id="276110">
    <property type="interactions" value="10"/>
</dbReference>
<dbReference type="FunCoup" id="O74885">
    <property type="interactions" value="1"/>
</dbReference>
<dbReference type="STRING" id="284812.O74885"/>
<dbReference type="PaxDb" id="4896-SPCC576.01c.1"/>
<dbReference type="EnsemblFungi" id="SPCC576.01c.1">
    <property type="protein sequence ID" value="SPCC576.01c.1:pep"/>
    <property type="gene ID" value="SPCC576.01c"/>
</dbReference>
<dbReference type="GeneID" id="2539549"/>
<dbReference type="KEGG" id="spo:2539549"/>
<dbReference type="PomBase" id="SPCC576.01c">
    <property type="gene designation" value="xan1"/>
</dbReference>
<dbReference type="VEuPathDB" id="FungiDB:SPCC576.01c"/>
<dbReference type="eggNOG" id="ENOG502QS34">
    <property type="taxonomic scope" value="Eukaryota"/>
</dbReference>
<dbReference type="HOGENOM" id="CLU_046574_1_0_1"/>
<dbReference type="InParanoid" id="O74885"/>
<dbReference type="OMA" id="VFPMTWK"/>
<dbReference type="PhylomeDB" id="O74885"/>
<dbReference type="PRO" id="PR:O74885"/>
<dbReference type="Proteomes" id="UP000002485">
    <property type="component" value="Chromosome III"/>
</dbReference>
<dbReference type="GO" id="GO:0005829">
    <property type="term" value="C:cytosol"/>
    <property type="evidence" value="ECO:0007005"/>
    <property type="project" value="PomBase"/>
</dbReference>
<dbReference type="GO" id="GO:0005634">
    <property type="term" value="C:nucleus"/>
    <property type="evidence" value="ECO:0007005"/>
    <property type="project" value="PomBase"/>
</dbReference>
<dbReference type="GO" id="GO:0097641">
    <property type="term" value="F:alpha-ketoglutarate-dependent xanthine dioxygenase activity"/>
    <property type="evidence" value="ECO:0000314"/>
    <property type="project" value="PomBase"/>
</dbReference>
<dbReference type="GO" id="GO:0005506">
    <property type="term" value="F:iron ion binding"/>
    <property type="evidence" value="ECO:0000304"/>
    <property type="project" value="PomBase"/>
</dbReference>
<dbReference type="GO" id="GO:0009115">
    <property type="term" value="P:xanthine catabolic process"/>
    <property type="evidence" value="ECO:0000315"/>
    <property type="project" value="PomBase"/>
</dbReference>
<dbReference type="FunFam" id="3.60.130.10:FF:000034">
    <property type="entry name" value="Alpha-ketoglutarate-dependent xanthine dioxygenase xanA"/>
    <property type="match status" value="1"/>
</dbReference>
<dbReference type="Gene3D" id="3.60.130.10">
    <property type="entry name" value="Clavaminate synthase-like"/>
    <property type="match status" value="1"/>
</dbReference>
<dbReference type="InterPro" id="IPR042098">
    <property type="entry name" value="TauD-like_sf"/>
</dbReference>
<dbReference type="InterPro" id="IPR003819">
    <property type="entry name" value="TauD/TfdA-like"/>
</dbReference>
<dbReference type="InterPro" id="IPR051178">
    <property type="entry name" value="TfdA_dioxygenase"/>
</dbReference>
<dbReference type="PANTHER" id="PTHR43779:SF2">
    <property type="entry name" value="ALPHA-KETOGLUTARATE-DEPENDENT XANTHINE DIOXYGENASE XAN1"/>
    <property type="match status" value="1"/>
</dbReference>
<dbReference type="PANTHER" id="PTHR43779">
    <property type="entry name" value="DIOXYGENASE RV0097-RELATED"/>
    <property type="match status" value="1"/>
</dbReference>
<dbReference type="Pfam" id="PF02668">
    <property type="entry name" value="TauD"/>
    <property type="match status" value="1"/>
</dbReference>
<dbReference type="SUPFAM" id="SSF51197">
    <property type="entry name" value="Clavaminate synthase-like"/>
    <property type="match status" value="1"/>
</dbReference>
<keyword id="KW-0963">Cytoplasm</keyword>
<keyword id="KW-0223">Dioxygenase</keyword>
<keyword id="KW-0408">Iron</keyword>
<keyword id="KW-0479">Metal-binding</keyword>
<keyword id="KW-0560">Oxidoreductase</keyword>
<keyword id="KW-1185">Reference proteome</keyword>
<evidence type="ECO:0000250" key="1">
    <source>
        <dbReference type="UniProtKB" id="C8VSZ2"/>
    </source>
</evidence>
<evidence type="ECO:0000250" key="2">
    <source>
        <dbReference type="UniProtKB" id="P37610"/>
    </source>
</evidence>
<evidence type="ECO:0000256" key="3">
    <source>
        <dbReference type="SAM" id="MobiDB-lite"/>
    </source>
</evidence>
<evidence type="ECO:0000269" key="4">
    <source>
    </source>
</evidence>
<evidence type="ECO:0000303" key="5">
    <source>
    </source>
</evidence>
<evidence type="ECO:0000305" key="6"/>
<proteinExistence type="evidence at protein level"/>
<feature type="chain" id="PRO_0000194021" description="Alpha-ketoglutarate-dependent xanthine dioxygenase xan1">
    <location>
        <begin position="1"/>
        <end position="413"/>
    </location>
</feature>
<feature type="region of interest" description="Disordered" evidence="3">
    <location>
        <begin position="1"/>
        <end position="24"/>
    </location>
</feature>
<feature type="compositionally biased region" description="Low complexity" evidence="3">
    <location>
        <begin position="1"/>
        <end position="18"/>
    </location>
</feature>
<feature type="binding site" evidence="2">
    <location>
        <position position="183"/>
    </location>
    <ligand>
        <name>Fe cation</name>
        <dbReference type="ChEBI" id="CHEBI:24875"/>
        <note>catalytic</note>
    </ligand>
</feature>
<feature type="binding site" evidence="2">
    <location>
        <position position="185"/>
    </location>
    <ligand>
        <name>Fe cation</name>
        <dbReference type="ChEBI" id="CHEBI:24875"/>
        <note>catalytic</note>
    </ligand>
</feature>
<feature type="binding site" evidence="2">
    <location>
        <position position="228"/>
    </location>
    <ligand>
        <name>2-oxoglutarate</name>
        <dbReference type="ChEBI" id="CHEBI:16810"/>
    </ligand>
</feature>
<feature type="binding site" evidence="2">
    <location>
        <position position="362"/>
    </location>
    <ligand>
        <name>2-oxoglutarate</name>
        <dbReference type="ChEBI" id="CHEBI:16810"/>
    </ligand>
</feature>
<feature type="binding site" evidence="2">
    <location>
        <position position="377"/>
    </location>
    <ligand>
        <name>Fe cation</name>
        <dbReference type="ChEBI" id="CHEBI:24875"/>
        <note>catalytic</note>
    </ligand>
</feature>
<feature type="binding site" evidence="2">
    <location>
        <position position="389"/>
    </location>
    <ligand>
        <name>2-oxoglutarate</name>
        <dbReference type="ChEBI" id="CHEBI:16810"/>
    </ligand>
</feature>
<name>XANA_SCHPO</name>
<accession>O74885</accession>
<accession>Q9C0U8</accession>
<reference key="1">
    <citation type="journal article" date="2002" name="Nature">
        <title>The genome sequence of Schizosaccharomyces pombe.</title>
        <authorList>
            <person name="Wood V."/>
            <person name="Gwilliam R."/>
            <person name="Rajandream M.A."/>
            <person name="Lyne M.H."/>
            <person name="Lyne R."/>
            <person name="Stewart A."/>
            <person name="Sgouros J.G."/>
            <person name="Peat N."/>
            <person name="Hayles J."/>
            <person name="Baker S.G."/>
            <person name="Basham D."/>
            <person name="Bowman S."/>
            <person name="Brooks K."/>
            <person name="Brown D."/>
            <person name="Brown S."/>
            <person name="Chillingworth T."/>
            <person name="Churcher C.M."/>
            <person name="Collins M."/>
            <person name="Connor R."/>
            <person name="Cronin A."/>
            <person name="Davis P."/>
            <person name="Feltwell T."/>
            <person name="Fraser A."/>
            <person name="Gentles S."/>
            <person name="Goble A."/>
            <person name="Hamlin N."/>
            <person name="Harris D.E."/>
            <person name="Hidalgo J."/>
            <person name="Hodgson G."/>
            <person name="Holroyd S."/>
            <person name="Hornsby T."/>
            <person name="Howarth S."/>
            <person name="Huckle E.J."/>
            <person name="Hunt S."/>
            <person name="Jagels K."/>
            <person name="James K.D."/>
            <person name="Jones L."/>
            <person name="Jones M."/>
            <person name="Leather S."/>
            <person name="McDonald S."/>
            <person name="McLean J."/>
            <person name="Mooney P."/>
            <person name="Moule S."/>
            <person name="Mungall K.L."/>
            <person name="Murphy L.D."/>
            <person name="Niblett D."/>
            <person name="Odell C."/>
            <person name="Oliver K."/>
            <person name="O'Neil S."/>
            <person name="Pearson D."/>
            <person name="Quail M.A."/>
            <person name="Rabbinowitsch E."/>
            <person name="Rutherford K.M."/>
            <person name="Rutter S."/>
            <person name="Saunders D."/>
            <person name="Seeger K."/>
            <person name="Sharp S."/>
            <person name="Skelton J."/>
            <person name="Simmonds M.N."/>
            <person name="Squares R."/>
            <person name="Squares S."/>
            <person name="Stevens K."/>
            <person name="Taylor K."/>
            <person name="Taylor R.G."/>
            <person name="Tivey A."/>
            <person name="Walsh S.V."/>
            <person name="Warren T."/>
            <person name="Whitehead S."/>
            <person name="Woodward J.R."/>
            <person name="Volckaert G."/>
            <person name="Aert R."/>
            <person name="Robben J."/>
            <person name="Grymonprez B."/>
            <person name="Weltjens I."/>
            <person name="Vanstreels E."/>
            <person name="Rieger M."/>
            <person name="Schaefer M."/>
            <person name="Mueller-Auer S."/>
            <person name="Gabel C."/>
            <person name="Fuchs M."/>
            <person name="Duesterhoeft A."/>
            <person name="Fritzc C."/>
            <person name="Holzer E."/>
            <person name="Moestl D."/>
            <person name="Hilbert H."/>
            <person name="Borzym K."/>
            <person name="Langer I."/>
            <person name="Beck A."/>
            <person name="Lehrach H."/>
            <person name="Reinhardt R."/>
            <person name="Pohl T.M."/>
            <person name="Eger P."/>
            <person name="Zimmermann W."/>
            <person name="Wedler H."/>
            <person name="Wambutt R."/>
            <person name="Purnelle B."/>
            <person name="Goffeau A."/>
            <person name="Cadieu E."/>
            <person name="Dreano S."/>
            <person name="Gloux S."/>
            <person name="Lelaure V."/>
            <person name="Mottier S."/>
            <person name="Galibert F."/>
            <person name="Aves S.J."/>
            <person name="Xiang Z."/>
            <person name="Hunt C."/>
            <person name="Moore K."/>
            <person name="Hurst S.M."/>
            <person name="Lucas M."/>
            <person name="Rochet M."/>
            <person name="Gaillardin C."/>
            <person name="Tallada V.A."/>
            <person name="Garzon A."/>
            <person name="Thode G."/>
            <person name="Daga R.R."/>
            <person name="Cruzado L."/>
            <person name="Jimenez J."/>
            <person name="Sanchez M."/>
            <person name="del Rey F."/>
            <person name="Benito J."/>
            <person name="Dominguez A."/>
            <person name="Revuelta J.L."/>
            <person name="Moreno S."/>
            <person name="Armstrong J."/>
            <person name="Forsburg S.L."/>
            <person name="Cerutti L."/>
            <person name="Lowe T."/>
            <person name="McCombie W.R."/>
            <person name="Paulsen I."/>
            <person name="Potashkin J."/>
            <person name="Shpakovski G.V."/>
            <person name="Ussery D."/>
            <person name="Barrell B.G."/>
            <person name="Nurse P."/>
        </authorList>
    </citation>
    <scope>NUCLEOTIDE SEQUENCE [LARGE SCALE GENOMIC DNA]</scope>
    <source>
        <strain>972 / ATCC 24843</strain>
    </source>
</reference>
<reference key="2">
    <citation type="journal article" date="2005" name="Mol. Microbiol.">
        <title>Convergent evolution of hydroxylation mechanisms in the fungal kingdom: molybdenum cofactor-independent hydroxylation of xanthine via alpha-ketoglutarate-dependent dioxygenases.</title>
        <authorList>
            <person name="Cultrone A."/>
            <person name="Scazzocchio C."/>
            <person name="Rochet M."/>
            <person name="Montero-Moran G."/>
            <person name="Drevet C."/>
            <person name="Fernandez-Martin R."/>
        </authorList>
    </citation>
    <scope>FUNCTION</scope>
    <scope>CATALYTIC ACTIVITY</scope>
    <scope>DISRUPTION PHENOTYPE</scope>
</reference>
<gene>
    <name type="primary">xan1</name>
    <name type="ORF">SPCC576.01c</name>
    <name type="ORF">SPCPB1C11.04c</name>
</gene>